<evidence type="ECO:0000255" key="1"/>
<evidence type="ECO:0000269" key="2">
    <source>
    </source>
</evidence>
<evidence type="ECO:0000269" key="3">
    <source>
    </source>
</evidence>
<evidence type="ECO:0000269" key="4">
    <source>
    </source>
</evidence>
<evidence type="ECO:0000269" key="5">
    <source>
    </source>
</evidence>
<evidence type="ECO:0000305" key="6"/>
<name>CLD17_HUMAN</name>
<proteinExistence type="evidence at protein level"/>
<protein>
    <recommendedName>
        <fullName>Claudin-17</fullName>
    </recommendedName>
</protein>
<sequence>MAFYPLQIAGLVLGFLGMVGTLATTLLPQWRVSAFVGSNIIVFERLWEGLWMNCIRQARVRLQCKFYSSLLALPPALETARALMCVAVALSLIALLIGICGMKQVQCTGSNERAKAYLLGTSGVLFILTGIFVLIPVSWTANIIIRDFYNPAIHIGQKRELGAALFLGWASAAVLFIGGGLLCGFCCCNRKKQGYRYPVPGYRVPHTDKRRNTTMLSKTSTSYV</sequence>
<keyword id="KW-0965">Cell junction</keyword>
<keyword id="KW-1003">Cell membrane</keyword>
<keyword id="KW-0868">Chloride</keyword>
<keyword id="KW-0869">Chloride channel</keyword>
<keyword id="KW-0407">Ion channel</keyword>
<keyword id="KW-0406">Ion transport</keyword>
<keyword id="KW-0472">Membrane</keyword>
<keyword id="KW-1267">Proteomics identification</keyword>
<keyword id="KW-1185">Reference proteome</keyword>
<keyword id="KW-0796">Tight junction</keyword>
<keyword id="KW-0812">Transmembrane</keyword>
<keyword id="KW-1133">Transmembrane helix</keyword>
<keyword id="KW-0813">Transport</keyword>
<comment type="function">
    <text evidence="3 4">Channel-forming tight junction protein with selectivity for anions, including chloride and hydrogencarbonate, and for solutes smaller than 9 Angstrom in diameter. In the kidney proximal tubule, may be involved in paracellular reabsorption of filtered anions. Does not affect water permeability.</text>
</comment>
<comment type="catalytic activity">
    <reaction evidence="3 4">
        <text>chloride(in) = chloride(out)</text>
        <dbReference type="Rhea" id="RHEA:29823"/>
        <dbReference type="ChEBI" id="CHEBI:17996"/>
    </reaction>
</comment>
<comment type="catalytic activity">
    <reaction evidence="3">
        <text>hydrogencarbonate(in) = hydrogencarbonate(out)</text>
        <dbReference type="Rhea" id="RHEA:28695"/>
        <dbReference type="ChEBI" id="CHEBI:17544"/>
    </reaction>
</comment>
<comment type="catalytic activity">
    <reaction evidence="3">
        <text>bromide(in) = bromide(out)</text>
        <dbReference type="Rhea" id="RHEA:75383"/>
        <dbReference type="ChEBI" id="CHEBI:15858"/>
    </reaction>
</comment>
<comment type="catalytic activity">
    <reaction evidence="3">
        <text>iodide(out) = iodide(in)</text>
        <dbReference type="Rhea" id="RHEA:66324"/>
        <dbReference type="ChEBI" id="CHEBI:16382"/>
    </reaction>
</comment>
<comment type="catalytic activity">
    <reaction evidence="3">
        <text>fluoride(in) = fluoride(out)</text>
        <dbReference type="Rhea" id="RHEA:76159"/>
        <dbReference type="ChEBI" id="CHEBI:17051"/>
    </reaction>
</comment>
<comment type="catalytic activity">
    <reaction evidence="3 4">
        <text>nitrate(in) = nitrate(out)</text>
        <dbReference type="Rhea" id="RHEA:34923"/>
        <dbReference type="ChEBI" id="CHEBI:17632"/>
    </reaction>
</comment>
<comment type="catalytic activity">
    <reaction evidence="4">
        <text>thiocyanate(in) = thiocyanate(out)</text>
        <dbReference type="Rhea" id="RHEA:75347"/>
        <dbReference type="ChEBI" id="CHEBI:18022"/>
    </reaction>
</comment>
<comment type="subunit">
    <text evidence="2 5">Cannot form tight junction strands on its own (PubMed:36008380). Interacts with OCLN (PubMed:20375010).</text>
</comment>
<comment type="subcellular location">
    <subcellularLocation>
        <location evidence="3 4">Cell junction</location>
        <location evidence="3 4">Tight junction</location>
    </subcellularLocation>
    <subcellularLocation>
        <location evidence="2">Basolateral cell membrane</location>
        <topology evidence="1">Multi-pass membrane protein</topology>
    </subcellularLocation>
</comment>
<comment type="tissue specificity">
    <text evidence="3">In the kidney, expressed in the proximal tubule and in the Henle's loop. In the distal convoluted tubule, not expressed in all tubules. Not detected in the collecting duct (at protein level).</text>
</comment>
<comment type="similarity">
    <text evidence="6">Belongs to the claudin family.</text>
</comment>
<comment type="sequence caution" evidence="6">
    <conflict type="frameshift">
        <sequence resource="EMBL-CDS" id="AAQ88461"/>
    </conflict>
</comment>
<feature type="chain" id="PRO_0000144777" description="Claudin-17">
    <location>
        <begin position="1"/>
        <end position="224"/>
    </location>
</feature>
<feature type="topological domain" description="Cytoplasmic" evidence="1">
    <location>
        <begin position="1"/>
        <end position="7"/>
    </location>
</feature>
<feature type="transmembrane region" description="Helical" evidence="1">
    <location>
        <begin position="8"/>
        <end position="28"/>
    </location>
</feature>
<feature type="topological domain" description="Extracellular" evidence="1">
    <location>
        <begin position="29"/>
        <end position="81"/>
    </location>
</feature>
<feature type="transmembrane region" description="Helical" evidence="1">
    <location>
        <begin position="82"/>
        <end position="102"/>
    </location>
</feature>
<feature type="topological domain" description="Cytoplasmic" evidence="1">
    <location>
        <begin position="103"/>
        <end position="124"/>
    </location>
</feature>
<feature type="transmembrane region" description="Helical" evidence="1">
    <location>
        <begin position="125"/>
        <end position="145"/>
    </location>
</feature>
<feature type="topological domain" description="Extracellular" evidence="1">
    <location>
        <begin position="146"/>
        <end position="164"/>
    </location>
</feature>
<feature type="transmembrane region" description="Helical" evidence="1">
    <location>
        <begin position="165"/>
        <end position="185"/>
    </location>
</feature>
<feature type="topological domain" description="Cytoplasmic" evidence="1">
    <location>
        <begin position="186"/>
        <end position="224"/>
    </location>
</feature>
<feature type="sequence variant" id="VAR_033774" description="In dbSNP:rs35531957.">
    <original>A</original>
    <variation>T</variation>
    <location>
        <position position="82"/>
    </location>
</feature>
<feature type="mutagenesis site" description="Decreased transepithelial resistance and anion selectivity. Higher permeability to chloride, sodium and also to larger anions, including pyruvate, nitrate, and thiocyanate." evidence="3">
    <original>R</original>
    <variation>E</variation>
    <location>
        <position position="31"/>
    </location>
</feature>
<feature type="mutagenesis site" description="Decreased transepithelial resistance and anion selectivity." evidence="3">
    <original>E</original>
    <variation>A</variation>
    <location>
        <position position="44"/>
    </location>
</feature>
<feature type="mutagenesis site" description="Decreased transepithelial resistance, no effect on anion selectivity." evidence="3">
    <original>R</original>
    <variation>A</variation>
    <location>
        <position position="45"/>
    </location>
</feature>
<feature type="mutagenesis site" description="Decreased transepithelial resistance and anion selectivity. Higher permeability to chloride, sodium and also to larger anions, including pyruvate, nitrate, and thiocyanate." evidence="3">
    <original>E</original>
    <variation>K</variation>
    <variation>Q</variation>
    <location>
        <position position="48"/>
    </location>
</feature>
<feature type="mutagenesis site" description="No effect on transepithelial resistance, nor on anion selectivity. Elevated permeabilities not only for chloride, but also for sodium and the larger anions, including pyruvate, nitrate and thiocyanate." evidence="3">
    <original>R</original>
    <variation>A</variation>
    <location>
        <position position="56"/>
    </location>
</feature>
<feature type="mutagenesis site" description="Decreased anion selectivity. Increased permeabilities not only for chloride, but also for sodium and thiocyanate. No effect on transepithelial resistance." evidence="3">
    <original>R</original>
    <variation>T</variation>
    <location>
        <position position="56"/>
    </location>
</feature>
<feature type="mutagenesis site" description="No effect on transepithelial resistance, nor on anion selectivity. Increased permeability for thiocyanate." evidence="3">
    <original>R</original>
    <variation>A</variation>
    <location>
        <position position="59"/>
    </location>
</feature>
<feature type="mutagenesis site" description="Decreased anion selectivity. No effect on transepithelial resistance." evidence="3">
    <original>R</original>
    <variation>A</variation>
    <location>
        <position position="61"/>
    </location>
</feature>
<feature type="mutagenesis site" description="Reduced channel formation ability. Increased transepithelial resistance. Loss of anion selectivity in favor of cation selectivity." evidence="3">
    <original>K</original>
    <variation>A</variation>
    <location>
        <position position="65"/>
    </location>
</feature>
<feature type="mutagenesis site" description="No effect on channel formation ability. Loss of anion selectivity in favor of cation selectivity. No effect on transepithelial resistance." evidence="3">
    <original>K</original>
    <variation>E</variation>
    <location>
        <position position="65"/>
    </location>
</feature>
<feature type="mutagenesis site" description="Strongly reduced channel formation ability. Increased transepithelial resistance. Loss of anion selectivity in favor of cation selectivity." evidence="3">
    <original>K</original>
    <variation>R</variation>
    <location>
        <position position="65"/>
    </location>
</feature>
<feature type="mutagenesis site" description="Increased transepithelial resistance. Loss of anion selectivity in favor of cation (sodium) selectivity." evidence="3">
    <original>S</original>
    <variation>E</variation>
    <location>
        <position position="68"/>
    </location>
</feature>
<feature type="mutagenesis site" description="Increased transepithelial resistance. No effect on localization to cell-cell junctions." evidence="3">
    <original>Y</original>
    <variation>A</variation>
    <location>
        <position position="149"/>
    </location>
</feature>
<feature type="mutagenesis site" description="Loss of anion selectivity. Strongly increased permeabilities not only for chloride, but also for sodium and the larger anions, including pyruvate, nitrate and thiocyanate. No effect on localization to cell-cell junctions." evidence="3">
    <original>H</original>
    <variation>A</variation>
    <location>
        <position position="154"/>
    </location>
</feature>
<gene>
    <name type="primary">CLDN17</name>
    <name type="ORF">UNQ758/PRO1489</name>
</gene>
<organism>
    <name type="scientific">Homo sapiens</name>
    <name type="common">Human</name>
    <dbReference type="NCBI Taxonomy" id="9606"/>
    <lineage>
        <taxon>Eukaryota</taxon>
        <taxon>Metazoa</taxon>
        <taxon>Chordata</taxon>
        <taxon>Craniata</taxon>
        <taxon>Vertebrata</taxon>
        <taxon>Euteleostomi</taxon>
        <taxon>Mammalia</taxon>
        <taxon>Eutheria</taxon>
        <taxon>Euarchontoglires</taxon>
        <taxon>Primates</taxon>
        <taxon>Haplorrhini</taxon>
        <taxon>Catarrhini</taxon>
        <taxon>Hominidae</taxon>
        <taxon>Homo</taxon>
    </lineage>
</organism>
<reference key="1">
    <citation type="submission" date="1999-11" db="EMBL/GenBank/DDBJ databases">
        <authorList>
            <person name="Keen T.J."/>
            <person name="Inglehearn C.F."/>
        </authorList>
    </citation>
    <scope>NUCLEOTIDE SEQUENCE [GENOMIC DNA]</scope>
</reference>
<reference key="2">
    <citation type="journal article" date="2003" name="Genome Res.">
        <title>The secreted protein discovery initiative (SPDI), a large-scale effort to identify novel human secreted and transmembrane proteins: a bioinformatics assessment.</title>
        <authorList>
            <person name="Clark H.F."/>
            <person name="Gurney A.L."/>
            <person name="Abaya E."/>
            <person name="Baker K."/>
            <person name="Baldwin D.T."/>
            <person name="Brush J."/>
            <person name="Chen J."/>
            <person name="Chow B."/>
            <person name="Chui C."/>
            <person name="Crowley C."/>
            <person name="Currell B."/>
            <person name="Deuel B."/>
            <person name="Dowd P."/>
            <person name="Eaton D."/>
            <person name="Foster J.S."/>
            <person name="Grimaldi C."/>
            <person name="Gu Q."/>
            <person name="Hass P.E."/>
            <person name="Heldens S."/>
            <person name="Huang A."/>
            <person name="Kim H.S."/>
            <person name="Klimowski L."/>
            <person name="Jin Y."/>
            <person name="Johnson S."/>
            <person name="Lee J."/>
            <person name="Lewis L."/>
            <person name="Liao D."/>
            <person name="Mark M.R."/>
            <person name="Robbie E."/>
            <person name="Sanchez C."/>
            <person name="Schoenfeld J."/>
            <person name="Seshagiri S."/>
            <person name="Simmons L."/>
            <person name="Singh J."/>
            <person name="Smith V."/>
            <person name="Stinson J."/>
            <person name="Vagts A."/>
            <person name="Vandlen R.L."/>
            <person name="Watanabe C."/>
            <person name="Wieand D."/>
            <person name="Woods K."/>
            <person name="Xie M.-H."/>
            <person name="Yansura D.G."/>
            <person name="Yi S."/>
            <person name="Yu G."/>
            <person name="Yuan J."/>
            <person name="Zhang M."/>
            <person name="Zhang Z."/>
            <person name="Goddard A.D."/>
            <person name="Wood W.I."/>
            <person name="Godowski P.J."/>
            <person name="Gray A.M."/>
        </authorList>
    </citation>
    <scope>NUCLEOTIDE SEQUENCE [LARGE SCALE MRNA]</scope>
</reference>
<reference key="3">
    <citation type="journal article" date="2000" name="Nature">
        <title>The DNA sequence of human chromosome 21.</title>
        <authorList>
            <person name="Hattori M."/>
            <person name="Fujiyama A."/>
            <person name="Taylor T.D."/>
            <person name="Watanabe H."/>
            <person name="Yada T."/>
            <person name="Park H.-S."/>
            <person name="Toyoda A."/>
            <person name="Ishii K."/>
            <person name="Totoki Y."/>
            <person name="Choi D.-K."/>
            <person name="Groner Y."/>
            <person name="Soeda E."/>
            <person name="Ohki M."/>
            <person name="Takagi T."/>
            <person name="Sakaki Y."/>
            <person name="Taudien S."/>
            <person name="Blechschmidt K."/>
            <person name="Polley A."/>
            <person name="Menzel U."/>
            <person name="Delabar J."/>
            <person name="Kumpf K."/>
            <person name="Lehmann R."/>
            <person name="Patterson D."/>
            <person name="Reichwald K."/>
            <person name="Rump A."/>
            <person name="Schillhabel M."/>
            <person name="Schudy A."/>
            <person name="Zimmermann W."/>
            <person name="Rosenthal A."/>
            <person name="Kudoh J."/>
            <person name="Shibuya K."/>
            <person name="Kawasaki K."/>
            <person name="Asakawa S."/>
            <person name="Shintani A."/>
            <person name="Sasaki T."/>
            <person name="Nagamine K."/>
            <person name="Mitsuyama S."/>
            <person name="Antonarakis S.E."/>
            <person name="Minoshima S."/>
            <person name="Shimizu N."/>
            <person name="Nordsiek G."/>
            <person name="Hornischer K."/>
            <person name="Brandt P."/>
            <person name="Scharfe M."/>
            <person name="Schoen O."/>
            <person name="Desario A."/>
            <person name="Reichelt J."/>
            <person name="Kauer G."/>
            <person name="Bloecker H."/>
            <person name="Ramser J."/>
            <person name="Beck A."/>
            <person name="Klages S."/>
            <person name="Hennig S."/>
            <person name="Riesselmann L."/>
            <person name="Dagand E."/>
            <person name="Wehrmeyer S."/>
            <person name="Borzym K."/>
            <person name="Gardiner K."/>
            <person name="Nizetic D."/>
            <person name="Francis F."/>
            <person name="Lehrach H."/>
            <person name="Reinhardt R."/>
            <person name="Yaspo M.-L."/>
        </authorList>
    </citation>
    <scope>NUCLEOTIDE SEQUENCE [LARGE SCALE GENOMIC DNA]</scope>
</reference>
<reference key="4">
    <citation type="journal article" date="2004" name="Genome Res.">
        <title>The status, quality, and expansion of the NIH full-length cDNA project: the Mammalian Gene Collection (MGC).</title>
        <authorList>
            <consortium name="The MGC Project Team"/>
        </authorList>
    </citation>
    <scope>NUCLEOTIDE SEQUENCE [LARGE SCALE MRNA]</scope>
    <source>
        <tissue>Brain</tissue>
    </source>
</reference>
<reference key="5">
    <citation type="journal article" date="2010" name="J. Biol. Chem.">
        <title>Claudin association with CD81 defines hepatitis C virus entry.</title>
        <authorList>
            <person name="Harris H.J."/>
            <person name="Davis C."/>
            <person name="Mullins J.G."/>
            <person name="Hu K."/>
            <person name="Goodall M."/>
            <person name="Farquhar M.J."/>
            <person name="Mee C.J."/>
            <person name="McCaffrey K."/>
            <person name="Young S."/>
            <person name="Drummer H."/>
            <person name="Balfe P."/>
            <person name="McKeating J.A."/>
        </authorList>
    </citation>
    <scope>SUBCELLULAR LOCATION</scope>
    <scope>INTERACTION WITH OCLN</scope>
</reference>
<reference key="6">
    <citation type="journal article" date="2012" name="Cell. Mol. Life Sci.">
        <title>Claudin-17 forms tight junction channels with distinct anion selectivity.</title>
        <authorList>
            <person name="Krug S.M."/>
            <person name="Guenzel D."/>
            <person name="Conrad M.P."/>
            <person name="Rosenthal R."/>
            <person name="Fromm A."/>
            <person name="Amasheh S."/>
            <person name="Schulzke J.D."/>
            <person name="Fromm M."/>
        </authorList>
    </citation>
    <scope>FUNCTION</scope>
    <scope>TRANSPORTER ACTIVITY</scope>
    <scope>SUBCELLULAR LOCATION</scope>
    <scope>TISSUE SPECIFICITY</scope>
    <scope>MUTAGENESIS OF LYS-65</scope>
</reference>
<reference key="7">
    <citation type="journal article" date="2016" name="Cell. Mol. Life Sci.">
        <title>Molecular basis of claudin-17 anion selectivity.</title>
        <authorList>
            <person name="Conrad M.P."/>
            <person name="Piontek J."/>
            <person name="Guenzel D."/>
            <person name="Fromm M."/>
            <person name="Krug S.M."/>
        </authorList>
    </citation>
    <scope>FUNCTION</scope>
    <scope>TRANSPORTER ACTIVITY</scope>
    <scope>SUBCELLULAR LOCATION</scope>
    <scope>MUTAGENESIS OF ARG-31; GLU-44; ARG-45; GLU-48; ARG-56; ARG-59; ARG-61; LYS-65; SER-68; TYR-149 AND HIS-154</scope>
</reference>
<reference key="8">
    <citation type="journal article" date="2022" name="Nat. Commun.">
        <title>Nanoscale segregation of channel and barrier claudins enables paracellular ion flux.</title>
        <authorList>
            <person name="Gonschior H."/>
            <person name="Schmied C."/>
            <person name="Van der Veen R.E."/>
            <person name="Eichhorst J."/>
            <person name="Himmerkus N."/>
            <person name="Piontek J."/>
            <person name="Guenzel D."/>
            <person name="Bleich M."/>
            <person name="Furuse M."/>
            <person name="Haucke V."/>
            <person name="Lehmann M."/>
        </authorList>
    </citation>
    <scope>SUBUNIT</scope>
</reference>
<accession>P56750</accession>
<accession>Q3MJB5</accession>
<accession>Q6UY37</accession>
<dbReference type="EMBL" id="AJ250712">
    <property type="protein sequence ID" value="CAB60616.1"/>
    <property type="molecule type" value="Genomic_DNA"/>
</dbReference>
<dbReference type="EMBL" id="AY358094">
    <property type="protein sequence ID" value="AAQ88461.1"/>
    <property type="status" value="ALT_FRAME"/>
    <property type="molecule type" value="mRNA"/>
</dbReference>
<dbReference type="EMBL" id="AP001707">
    <property type="protein sequence ID" value="BAA95566.1"/>
    <property type="molecule type" value="Genomic_DNA"/>
</dbReference>
<dbReference type="EMBL" id="BC101503">
    <property type="protein sequence ID" value="AAI01504.1"/>
    <property type="molecule type" value="mRNA"/>
</dbReference>
<dbReference type="EMBL" id="BC101505">
    <property type="protein sequence ID" value="AAI01506.1"/>
    <property type="molecule type" value="mRNA"/>
</dbReference>
<dbReference type="CCDS" id="CCDS13586.1"/>
<dbReference type="RefSeq" id="NP_036263.1">
    <property type="nucleotide sequence ID" value="NM_012131.3"/>
</dbReference>
<dbReference type="SMR" id="P56750"/>
<dbReference type="BioGRID" id="117667">
    <property type="interactions" value="9"/>
</dbReference>
<dbReference type="FunCoup" id="P56750">
    <property type="interactions" value="351"/>
</dbReference>
<dbReference type="IntAct" id="P56750">
    <property type="interactions" value="3"/>
</dbReference>
<dbReference type="STRING" id="9606.ENSP00000286808"/>
<dbReference type="TCDB" id="1.H.1.1.13">
    <property type="family name" value="the claudin tight junction (claudin1) family"/>
</dbReference>
<dbReference type="iPTMnet" id="P56750"/>
<dbReference type="PhosphoSitePlus" id="P56750"/>
<dbReference type="BioMuta" id="CLDN17"/>
<dbReference type="DMDM" id="6685309"/>
<dbReference type="MassIVE" id="P56750"/>
<dbReference type="PaxDb" id="9606-ENSP00000286808"/>
<dbReference type="PeptideAtlas" id="P56750"/>
<dbReference type="Antibodypedia" id="6585">
    <property type="antibodies" value="120 antibodies from 24 providers"/>
</dbReference>
<dbReference type="DNASU" id="26285"/>
<dbReference type="Ensembl" id="ENST00000286808.5">
    <property type="protein sequence ID" value="ENSP00000286808.3"/>
    <property type="gene ID" value="ENSG00000156282.5"/>
</dbReference>
<dbReference type="GeneID" id="26285"/>
<dbReference type="KEGG" id="hsa:26285"/>
<dbReference type="MANE-Select" id="ENST00000286808.5">
    <property type="protein sequence ID" value="ENSP00000286808.3"/>
    <property type="RefSeq nucleotide sequence ID" value="NM_012131.3"/>
    <property type="RefSeq protein sequence ID" value="NP_036263.1"/>
</dbReference>
<dbReference type="UCSC" id="uc011acv.3">
    <property type="organism name" value="human"/>
</dbReference>
<dbReference type="AGR" id="HGNC:2038"/>
<dbReference type="CTD" id="26285"/>
<dbReference type="DisGeNET" id="26285"/>
<dbReference type="GeneCards" id="CLDN17"/>
<dbReference type="HGNC" id="HGNC:2038">
    <property type="gene designation" value="CLDN17"/>
</dbReference>
<dbReference type="HPA" id="ENSG00000156282">
    <property type="expression patterns" value="Group enriched (cervix, esophagus, salivary gland, vagina)"/>
</dbReference>
<dbReference type="MIM" id="617005">
    <property type="type" value="gene"/>
</dbReference>
<dbReference type="neXtProt" id="NX_P56750"/>
<dbReference type="OpenTargets" id="ENSG00000156282"/>
<dbReference type="PharmGKB" id="PA26564"/>
<dbReference type="VEuPathDB" id="HostDB:ENSG00000156282"/>
<dbReference type="eggNOG" id="ENOG502RTNJ">
    <property type="taxonomic scope" value="Eukaryota"/>
</dbReference>
<dbReference type="GeneTree" id="ENSGT00940000162550"/>
<dbReference type="HOGENOM" id="CLU_076370_1_2_1"/>
<dbReference type="InParanoid" id="P56750"/>
<dbReference type="OMA" id="VCWTANI"/>
<dbReference type="OrthoDB" id="8819159at2759"/>
<dbReference type="PAN-GO" id="P56750">
    <property type="GO annotations" value="4 GO annotations based on evolutionary models"/>
</dbReference>
<dbReference type="PhylomeDB" id="P56750"/>
<dbReference type="TreeFam" id="TF331936"/>
<dbReference type="PathwayCommons" id="P56750"/>
<dbReference type="Reactome" id="R-HSA-420029">
    <property type="pathway name" value="Tight junction interactions"/>
</dbReference>
<dbReference type="SignaLink" id="P56750"/>
<dbReference type="SIGNOR" id="P56750"/>
<dbReference type="BioGRID-ORCS" id="26285">
    <property type="hits" value="10 hits in 1134 CRISPR screens"/>
</dbReference>
<dbReference type="GeneWiki" id="CLDN17"/>
<dbReference type="GenomeRNAi" id="26285"/>
<dbReference type="Pharos" id="P56750">
    <property type="development level" value="Tbio"/>
</dbReference>
<dbReference type="PRO" id="PR:P56750"/>
<dbReference type="Proteomes" id="UP000005640">
    <property type="component" value="Chromosome 21"/>
</dbReference>
<dbReference type="RNAct" id="P56750">
    <property type="molecule type" value="protein"/>
</dbReference>
<dbReference type="Bgee" id="ENSG00000156282">
    <property type="expression patterns" value="Expressed in male germ line stem cell (sensu Vertebrata) in testis and 41 other cell types or tissues"/>
</dbReference>
<dbReference type="GO" id="GO:0016323">
    <property type="term" value="C:basolateral plasma membrane"/>
    <property type="evidence" value="ECO:0007669"/>
    <property type="project" value="UniProtKB-SubCell"/>
</dbReference>
<dbReference type="GO" id="GO:0005923">
    <property type="term" value="C:bicellular tight junction"/>
    <property type="evidence" value="ECO:0000250"/>
    <property type="project" value="UniProtKB"/>
</dbReference>
<dbReference type="GO" id="GO:0034707">
    <property type="term" value="C:chloride channel complex"/>
    <property type="evidence" value="ECO:0007669"/>
    <property type="project" value="UniProtKB-KW"/>
</dbReference>
<dbReference type="GO" id="GO:0005886">
    <property type="term" value="C:plasma membrane"/>
    <property type="evidence" value="ECO:0000314"/>
    <property type="project" value="UniProtKB"/>
</dbReference>
<dbReference type="GO" id="GO:0070160">
    <property type="term" value="C:tight junction"/>
    <property type="evidence" value="ECO:0000314"/>
    <property type="project" value="UniProtKB"/>
</dbReference>
<dbReference type="GO" id="GO:0015267">
    <property type="term" value="F:channel activity"/>
    <property type="evidence" value="ECO:0000314"/>
    <property type="project" value="UniProtKB"/>
</dbReference>
<dbReference type="GO" id="GO:0005254">
    <property type="term" value="F:chloride channel activity"/>
    <property type="evidence" value="ECO:0007669"/>
    <property type="project" value="UniProtKB-KW"/>
</dbReference>
<dbReference type="GO" id="GO:0042802">
    <property type="term" value="F:identical protein binding"/>
    <property type="evidence" value="ECO:0000250"/>
    <property type="project" value="UniProtKB"/>
</dbReference>
<dbReference type="GO" id="GO:0160187">
    <property type="term" value="F:paracellular tight junction channel activity"/>
    <property type="evidence" value="ECO:0000314"/>
    <property type="project" value="UniProtKB"/>
</dbReference>
<dbReference type="GO" id="GO:0005198">
    <property type="term" value="F:structural molecule activity"/>
    <property type="evidence" value="ECO:0007669"/>
    <property type="project" value="InterPro"/>
</dbReference>
<dbReference type="GO" id="GO:0070830">
    <property type="term" value="P:bicellular tight junction assembly"/>
    <property type="evidence" value="ECO:0000318"/>
    <property type="project" value="GO_Central"/>
</dbReference>
<dbReference type="GO" id="GO:0016338">
    <property type="term" value="P:calcium-independent cell-cell adhesion via plasma membrane cell-adhesion molecules"/>
    <property type="evidence" value="ECO:0000250"/>
    <property type="project" value="UniProtKB"/>
</dbReference>
<dbReference type="GO" id="GO:0007155">
    <property type="term" value="P:cell adhesion"/>
    <property type="evidence" value="ECO:0000318"/>
    <property type="project" value="GO_Central"/>
</dbReference>
<dbReference type="GO" id="GO:0160184">
    <property type="term" value="P:paracellular transport"/>
    <property type="evidence" value="ECO:0000314"/>
    <property type="project" value="UniProtKB"/>
</dbReference>
<dbReference type="FunFam" id="1.20.140.150:FF:000001">
    <property type="entry name" value="Claudin"/>
    <property type="match status" value="1"/>
</dbReference>
<dbReference type="Gene3D" id="1.20.140.150">
    <property type="match status" value="1"/>
</dbReference>
<dbReference type="InterPro" id="IPR006187">
    <property type="entry name" value="Claudin"/>
</dbReference>
<dbReference type="InterPro" id="IPR017974">
    <property type="entry name" value="Claudin_CS"/>
</dbReference>
<dbReference type="InterPro" id="IPR004031">
    <property type="entry name" value="PMP22/EMP/MP20/Claudin"/>
</dbReference>
<dbReference type="PANTHER" id="PTHR12002">
    <property type="entry name" value="CLAUDIN"/>
    <property type="match status" value="1"/>
</dbReference>
<dbReference type="Pfam" id="PF00822">
    <property type="entry name" value="PMP22_Claudin"/>
    <property type="match status" value="1"/>
</dbReference>
<dbReference type="PRINTS" id="PR01077">
    <property type="entry name" value="CLAUDIN"/>
</dbReference>
<dbReference type="PRINTS" id="PR01385">
    <property type="entry name" value="CLAUDIN14"/>
</dbReference>
<dbReference type="PROSITE" id="PS01346">
    <property type="entry name" value="CLAUDIN"/>
    <property type="match status" value="1"/>
</dbReference>